<proteinExistence type="evidence at transcript level"/>
<name>GT13_ORYSJ</name>
<evidence type="ECO:0000250" key="1"/>
<evidence type="ECO:0000255" key="2"/>
<evidence type="ECO:0000305" key="3"/>
<sequence length="422" mass="47257">MGTRPCAGVASAVAAAVAVLLLAVSCFAAAATTTQKHGRMSGKGGDVLEDDPTGKLKVFVYEMPRKYNLNLLAKDSRCLQHMFAAEIFMHQFLLSSPVRTLDPEEADWFYTPAYTTCDLTPQGFPLPFRAPRIMRSAVRYVAATWPYWNRTDGADHFFLAPHDFGACFHYQEERAIERGILPVLRRATLVQTFGQRHHPCLQPGSITVPPYADPRKMEAHRISPATPRSIFVYFRGLFYDMGNDPEGGYYARGARASVWENFKDNPLFDISTEHPATYYEDMQRAIFCLCPLGWAPWSPRLVEAVVFGCIPVIIADDIVLPFADAIPWGEISVFVAEEDVPRLDTILASVPLDEVIRKQRLLASPAMKQAVLFHQPARPGDAFHQILNGLARKLPHPKGVFLEPGEKGIDWDQGLENDLKPW</sequence>
<reference key="1">
    <citation type="journal article" date="2002" name="Nature">
        <title>The genome sequence and structure of rice chromosome 1.</title>
        <authorList>
            <person name="Sasaki T."/>
            <person name="Matsumoto T."/>
            <person name="Yamamoto K."/>
            <person name="Sakata K."/>
            <person name="Baba T."/>
            <person name="Katayose Y."/>
            <person name="Wu J."/>
            <person name="Niimura Y."/>
            <person name="Cheng Z."/>
            <person name="Nagamura Y."/>
            <person name="Antonio B.A."/>
            <person name="Kanamori H."/>
            <person name="Hosokawa S."/>
            <person name="Masukawa M."/>
            <person name="Arikawa K."/>
            <person name="Chiden Y."/>
            <person name="Hayashi M."/>
            <person name="Okamoto M."/>
            <person name="Ando T."/>
            <person name="Aoki H."/>
            <person name="Arita K."/>
            <person name="Hamada M."/>
            <person name="Harada C."/>
            <person name="Hijishita S."/>
            <person name="Honda M."/>
            <person name="Ichikawa Y."/>
            <person name="Idonuma A."/>
            <person name="Iijima M."/>
            <person name="Ikeda M."/>
            <person name="Ikeno M."/>
            <person name="Ito S."/>
            <person name="Ito T."/>
            <person name="Ito Y."/>
            <person name="Ito Y."/>
            <person name="Iwabuchi A."/>
            <person name="Kamiya K."/>
            <person name="Karasawa W."/>
            <person name="Katagiri S."/>
            <person name="Kikuta A."/>
            <person name="Kobayashi N."/>
            <person name="Kono I."/>
            <person name="Machita K."/>
            <person name="Maehara T."/>
            <person name="Mizuno H."/>
            <person name="Mizubayashi T."/>
            <person name="Mukai Y."/>
            <person name="Nagasaki H."/>
            <person name="Nakashima M."/>
            <person name="Nakama Y."/>
            <person name="Nakamichi Y."/>
            <person name="Nakamura M."/>
            <person name="Namiki N."/>
            <person name="Negishi M."/>
            <person name="Ohta I."/>
            <person name="Ono N."/>
            <person name="Saji S."/>
            <person name="Sakai K."/>
            <person name="Shibata M."/>
            <person name="Shimokawa T."/>
            <person name="Shomura A."/>
            <person name="Song J."/>
            <person name="Takazaki Y."/>
            <person name="Terasawa K."/>
            <person name="Tsuji K."/>
            <person name="Waki K."/>
            <person name="Yamagata H."/>
            <person name="Yamane H."/>
            <person name="Yoshiki S."/>
            <person name="Yoshihara R."/>
            <person name="Yukawa K."/>
            <person name="Zhong H."/>
            <person name="Iwama H."/>
            <person name="Endo T."/>
            <person name="Ito H."/>
            <person name="Hahn J.H."/>
            <person name="Kim H.-I."/>
            <person name="Eun M.-Y."/>
            <person name="Yano M."/>
            <person name="Jiang J."/>
            <person name="Gojobori T."/>
        </authorList>
    </citation>
    <scope>NUCLEOTIDE SEQUENCE [LARGE SCALE GENOMIC DNA]</scope>
    <source>
        <strain>cv. Nipponbare</strain>
    </source>
</reference>
<reference key="2">
    <citation type="journal article" date="2005" name="Nature">
        <title>The map-based sequence of the rice genome.</title>
        <authorList>
            <consortium name="International rice genome sequencing project (IRGSP)"/>
        </authorList>
    </citation>
    <scope>NUCLEOTIDE SEQUENCE [LARGE SCALE GENOMIC DNA]</scope>
    <source>
        <strain>cv. Nipponbare</strain>
    </source>
</reference>
<reference key="3">
    <citation type="journal article" date="2008" name="Nucleic Acids Res.">
        <title>The rice annotation project database (RAP-DB): 2008 update.</title>
        <authorList>
            <consortium name="The rice annotation project (RAP)"/>
        </authorList>
    </citation>
    <scope>GENOME REANNOTATION</scope>
    <source>
        <strain>cv. Nipponbare</strain>
    </source>
</reference>
<reference key="4">
    <citation type="journal article" date="2013" name="Rice">
        <title>Improvement of the Oryza sativa Nipponbare reference genome using next generation sequence and optical map data.</title>
        <authorList>
            <person name="Kawahara Y."/>
            <person name="de la Bastide M."/>
            <person name="Hamilton J.P."/>
            <person name="Kanamori H."/>
            <person name="McCombie W.R."/>
            <person name="Ouyang S."/>
            <person name="Schwartz D.C."/>
            <person name="Tanaka T."/>
            <person name="Wu J."/>
            <person name="Zhou S."/>
            <person name="Childs K.L."/>
            <person name="Davidson R.M."/>
            <person name="Lin H."/>
            <person name="Quesada-Ocampo L."/>
            <person name="Vaillancourt B."/>
            <person name="Sakai H."/>
            <person name="Lee S.S."/>
            <person name="Kim J."/>
            <person name="Numa H."/>
            <person name="Itoh T."/>
            <person name="Buell C.R."/>
            <person name="Matsumoto T."/>
        </authorList>
    </citation>
    <scope>GENOME REANNOTATION</scope>
    <source>
        <strain>cv. Nipponbare</strain>
    </source>
</reference>
<reference key="5">
    <citation type="journal article" date="2003" name="Science">
        <title>Collection, mapping, and annotation of over 28,000 cDNA clones from japonica rice.</title>
        <authorList>
            <consortium name="The rice full-length cDNA consortium"/>
        </authorList>
    </citation>
    <scope>NUCLEOTIDE SEQUENCE [LARGE SCALE MRNA]</scope>
    <source>
        <strain>cv. Nipponbare</strain>
    </source>
</reference>
<feature type="chain" id="PRO_0000407567" description="Probable glucuronosyltransferase Os01g0926400">
    <location>
        <begin position="1"/>
        <end position="422"/>
    </location>
</feature>
<feature type="topological domain" description="Cytoplasmic" evidence="2">
    <location>
        <begin position="1"/>
        <end position="8"/>
    </location>
</feature>
<feature type="transmembrane region" description="Helical; Signal-anchor for type II membrane protein" evidence="2">
    <location>
        <begin position="9"/>
        <end position="29"/>
    </location>
</feature>
<feature type="topological domain" description="Lumenal" evidence="2">
    <location>
        <begin position="30"/>
        <end position="422"/>
    </location>
</feature>
<feature type="glycosylation site" description="N-linked (GlcNAc...) asparagine" evidence="2">
    <location>
        <position position="149"/>
    </location>
</feature>
<organism>
    <name type="scientific">Oryza sativa subsp. japonica</name>
    <name type="common">Rice</name>
    <dbReference type="NCBI Taxonomy" id="39947"/>
    <lineage>
        <taxon>Eukaryota</taxon>
        <taxon>Viridiplantae</taxon>
        <taxon>Streptophyta</taxon>
        <taxon>Embryophyta</taxon>
        <taxon>Tracheophyta</taxon>
        <taxon>Spermatophyta</taxon>
        <taxon>Magnoliopsida</taxon>
        <taxon>Liliopsida</taxon>
        <taxon>Poales</taxon>
        <taxon>Poaceae</taxon>
        <taxon>BOP clade</taxon>
        <taxon>Oryzoideae</taxon>
        <taxon>Oryzeae</taxon>
        <taxon>Oryzinae</taxon>
        <taxon>Oryza</taxon>
        <taxon>Oryza sativa</taxon>
    </lineage>
</organism>
<protein>
    <recommendedName>
        <fullName>Probable glucuronosyltransferase Os01g0926400</fullName>
        <ecNumber>2.4.-.-</ecNumber>
    </recommendedName>
    <alternativeName>
        <fullName>OsGT47D</fullName>
    </alternativeName>
</protein>
<accession>Q8S1X9</accession>
<accession>A0A0N7KEC0</accession>
<comment type="function">
    <text evidence="1">Involved in the synthesis of glucuronoxylan hemicellulose in secondary cell walls.</text>
</comment>
<comment type="subcellular location">
    <subcellularLocation>
        <location evidence="1">Golgi apparatus membrane</location>
        <topology evidence="1">Single-pass type II membrane protein</topology>
    </subcellularLocation>
</comment>
<comment type="similarity">
    <text evidence="3">Belongs to the glycosyltransferase 47 family.</text>
</comment>
<dbReference type="EC" id="2.4.-.-"/>
<dbReference type="EMBL" id="AP003262">
    <property type="protein sequence ID" value="BAB89668.1"/>
    <property type="molecule type" value="Genomic_DNA"/>
</dbReference>
<dbReference type="EMBL" id="AP004332">
    <property type="protein sequence ID" value="BAB92891.1"/>
    <property type="molecule type" value="Genomic_DNA"/>
</dbReference>
<dbReference type="EMBL" id="AP008207">
    <property type="protein sequence ID" value="BAF07176.1"/>
    <property type="molecule type" value="Genomic_DNA"/>
</dbReference>
<dbReference type="EMBL" id="AP014957">
    <property type="protein sequence ID" value="BAS75993.1"/>
    <property type="molecule type" value="Genomic_DNA"/>
</dbReference>
<dbReference type="EMBL" id="AK063916">
    <property type="protein sequence ID" value="BAG88909.1"/>
    <property type="molecule type" value="mRNA"/>
</dbReference>
<dbReference type="EMBL" id="AK073976">
    <property type="protein sequence ID" value="BAG93739.1"/>
    <property type="molecule type" value="mRNA"/>
</dbReference>
<dbReference type="RefSeq" id="XP_015622322.1">
    <property type="nucleotide sequence ID" value="XM_015766836.1"/>
</dbReference>
<dbReference type="FunCoup" id="Q8S1X9">
    <property type="interactions" value="2"/>
</dbReference>
<dbReference type="STRING" id="39947.Q8S1X9"/>
<dbReference type="CAZy" id="GT47">
    <property type="family name" value="Glycosyltransferase Family 47"/>
</dbReference>
<dbReference type="PaxDb" id="39947-Q8S1X9"/>
<dbReference type="EnsemblPlants" id="Os01t0926400-01">
    <property type="protein sequence ID" value="Os01t0926400-01"/>
    <property type="gene ID" value="Os01g0926400"/>
</dbReference>
<dbReference type="EnsemblPlants" id="Os01t0926400-03">
    <property type="protein sequence ID" value="Os01t0926400-03"/>
    <property type="gene ID" value="Os01g0926400"/>
</dbReference>
<dbReference type="Gramene" id="Os01t0926400-01">
    <property type="protein sequence ID" value="Os01t0926400-01"/>
    <property type="gene ID" value="Os01g0926400"/>
</dbReference>
<dbReference type="Gramene" id="Os01t0926400-03">
    <property type="protein sequence ID" value="Os01t0926400-03"/>
    <property type="gene ID" value="Os01g0926400"/>
</dbReference>
<dbReference type="KEGG" id="dosa:Os01g0926400"/>
<dbReference type="eggNOG" id="KOG1021">
    <property type="taxonomic scope" value="Eukaryota"/>
</dbReference>
<dbReference type="HOGENOM" id="CLU_039682_1_0_1"/>
<dbReference type="InParanoid" id="Q8S1X9"/>
<dbReference type="OMA" id="QHEPGRI"/>
<dbReference type="OrthoDB" id="1924787at2759"/>
<dbReference type="Proteomes" id="UP000000763">
    <property type="component" value="Chromosome 1"/>
</dbReference>
<dbReference type="Proteomes" id="UP000059680">
    <property type="component" value="Chromosome 1"/>
</dbReference>
<dbReference type="ExpressionAtlas" id="Q8S1X9">
    <property type="expression patterns" value="baseline and differential"/>
</dbReference>
<dbReference type="GO" id="GO:0000139">
    <property type="term" value="C:Golgi membrane"/>
    <property type="evidence" value="ECO:0007669"/>
    <property type="project" value="UniProtKB-SubCell"/>
</dbReference>
<dbReference type="GO" id="GO:0016757">
    <property type="term" value="F:glycosyltransferase activity"/>
    <property type="evidence" value="ECO:0007669"/>
    <property type="project" value="UniProtKB-KW"/>
</dbReference>
<dbReference type="GO" id="GO:0071555">
    <property type="term" value="P:cell wall organization"/>
    <property type="evidence" value="ECO:0007669"/>
    <property type="project" value="UniProtKB-KW"/>
</dbReference>
<dbReference type="GO" id="GO:0010417">
    <property type="term" value="P:glucuronoxylan biosynthetic process"/>
    <property type="evidence" value="ECO:0000318"/>
    <property type="project" value="GO_Central"/>
</dbReference>
<dbReference type="GO" id="GO:0009834">
    <property type="term" value="P:plant-type secondary cell wall biogenesis"/>
    <property type="evidence" value="ECO:0000318"/>
    <property type="project" value="GO_Central"/>
</dbReference>
<dbReference type="GO" id="GO:0006486">
    <property type="term" value="P:protein glycosylation"/>
    <property type="evidence" value="ECO:0007669"/>
    <property type="project" value="InterPro"/>
</dbReference>
<dbReference type="InterPro" id="IPR004263">
    <property type="entry name" value="Exostosin"/>
</dbReference>
<dbReference type="InterPro" id="IPR040911">
    <property type="entry name" value="Exostosin_GT47"/>
</dbReference>
<dbReference type="PANTHER" id="PTHR11062">
    <property type="entry name" value="EXOSTOSIN HEPARAN SULFATE GLYCOSYLTRANSFERASE -RELATED"/>
    <property type="match status" value="1"/>
</dbReference>
<dbReference type="PANTHER" id="PTHR11062:SF125">
    <property type="entry name" value="GLUCURONOSYLTRANSFERASE OS01G0926400-RELATED"/>
    <property type="match status" value="1"/>
</dbReference>
<dbReference type="Pfam" id="PF03016">
    <property type="entry name" value="Exostosin_GT47"/>
    <property type="match status" value="1"/>
</dbReference>
<gene>
    <name type="ordered locus">Os01g0926400</name>
    <name type="ordered locus">LOC_Os01g70180</name>
    <name type="ORF">OSJNBa0093F16.16</name>
    <name type="ORF">P0482D04.15</name>
</gene>
<keyword id="KW-0961">Cell wall biogenesis/degradation</keyword>
<keyword id="KW-0325">Glycoprotein</keyword>
<keyword id="KW-0328">Glycosyltransferase</keyword>
<keyword id="KW-0333">Golgi apparatus</keyword>
<keyword id="KW-0472">Membrane</keyword>
<keyword id="KW-1185">Reference proteome</keyword>
<keyword id="KW-0735">Signal-anchor</keyword>
<keyword id="KW-0808">Transferase</keyword>
<keyword id="KW-0812">Transmembrane</keyword>
<keyword id="KW-1133">Transmembrane helix</keyword>